<organism>
    <name type="scientific">Yersinia pestis (strain Z176003)</name>
    <dbReference type="NCBI Taxonomy" id="637386"/>
    <lineage>
        <taxon>Bacteria</taxon>
        <taxon>Pseudomonadati</taxon>
        <taxon>Pseudomonadota</taxon>
        <taxon>Gammaproteobacteria</taxon>
        <taxon>Enterobacterales</taxon>
        <taxon>Yersiniaceae</taxon>
        <taxon>Yersinia</taxon>
    </lineage>
</organism>
<evidence type="ECO:0000250" key="1"/>
<evidence type="ECO:0000255" key="2"/>
<evidence type="ECO:0000305" key="3"/>
<protein>
    <recommendedName>
        <fullName>Multidrug transporter MdfA</fullName>
    </recommendedName>
</protein>
<reference key="1">
    <citation type="journal article" date="2010" name="J. Bacteriol.">
        <title>Complete genome sequences of Yersinia pestis from natural foci in China.</title>
        <authorList>
            <person name="Shen X."/>
            <person name="Wang Q."/>
            <person name="Xia L."/>
            <person name="Zhu X."/>
            <person name="Zhang Z."/>
            <person name="Liang Y."/>
            <person name="Cai H."/>
            <person name="Zhang E."/>
            <person name="Wei J."/>
            <person name="Chen C."/>
            <person name="Song Z."/>
            <person name="Zhang H."/>
            <person name="Yu D."/>
            <person name="Hai R."/>
        </authorList>
    </citation>
    <scope>NUCLEOTIDE SEQUENCE [LARGE SCALE GENOMIC DNA]</scope>
    <source>
        <strain>Z176003</strain>
    </source>
</reference>
<keyword id="KW-0046">Antibiotic resistance</keyword>
<keyword id="KW-0997">Cell inner membrane</keyword>
<keyword id="KW-1003">Cell membrane</keyword>
<keyword id="KW-0472">Membrane</keyword>
<keyword id="KW-0812">Transmembrane</keyword>
<keyword id="KW-1133">Transmembrane helix</keyword>
<keyword id="KW-0813">Transport</keyword>
<gene>
    <name type="primary">mdfA</name>
    <name type="ordered locus">YPZ3_3471</name>
</gene>
<feature type="chain" id="PRO_0000405341" description="Multidrug transporter MdfA">
    <location>
        <begin position="1"/>
        <end position="409"/>
    </location>
</feature>
<feature type="topological domain" description="Cytoplasmic" evidence="2">
    <location>
        <begin position="1"/>
        <end position="15"/>
    </location>
</feature>
<feature type="transmembrane region" description="Helical" evidence="2">
    <location>
        <begin position="16"/>
        <end position="36"/>
    </location>
</feature>
<feature type="topological domain" description="Periplasmic" evidence="2">
    <location>
        <begin position="37"/>
        <end position="52"/>
    </location>
</feature>
<feature type="transmembrane region" description="Helical" evidence="2">
    <location>
        <begin position="53"/>
        <end position="73"/>
    </location>
</feature>
<feature type="topological domain" description="Cytoplasmic" evidence="2">
    <location>
        <begin position="74"/>
        <end position="82"/>
    </location>
</feature>
<feature type="transmembrane region" description="Helical" evidence="2">
    <location>
        <begin position="83"/>
        <end position="103"/>
    </location>
</feature>
<feature type="topological domain" description="Periplasmic" evidence="2">
    <location>
        <begin position="104"/>
        <end position="107"/>
    </location>
</feature>
<feature type="transmembrane region" description="Helical" evidence="2">
    <location>
        <begin position="108"/>
        <end position="128"/>
    </location>
</feature>
<feature type="topological domain" description="Cytoplasmic" evidence="2">
    <location>
        <begin position="129"/>
        <end position="144"/>
    </location>
</feature>
<feature type="transmembrane region" description="Helical" evidence="2">
    <location>
        <begin position="145"/>
        <end position="165"/>
    </location>
</feature>
<feature type="topological domain" description="Periplasmic" evidence="2">
    <location>
        <begin position="166"/>
        <end position="168"/>
    </location>
</feature>
<feature type="transmembrane region" description="Helical" evidence="2">
    <location>
        <begin position="169"/>
        <end position="189"/>
    </location>
</feature>
<feature type="topological domain" description="Cytoplasmic" evidence="2">
    <location>
        <begin position="190"/>
        <end position="226"/>
    </location>
</feature>
<feature type="transmembrane region" description="Helical" evidence="2">
    <location>
        <begin position="227"/>
        <end position="247"/>
    </location>
</feature>
<feature type="topological domain" description="Periplasmic" evidence="2">
    <location>
        <begin position="248"/>
        <end position="254"/>
    </location>
</feature>
<feature type="transmembrane region" description="Helical" evidence="2">
    <location>
        <begin position="255"/>
        <end position="275"/>
    </location>
</feature>
<feature type="topological domain" description="Cytoplasmic" evidence="2">
    <location>
        <begin position="276"/>
        <end position="286"/>
    </location>
</feature>
<feature type="transmembrane region" description="Helical" evidence="2">
    <location>
        <begin position="287"/>
        <end position="307"/>
    </location>
</feature>
<feature type="topological domain" description="Periplasmic" evidence="2">
    <location>
        <begin position="308"/>
        <end position="314"/>
    </location>
</feature>
<feature type="transmembrane region" description="Helical" evidence="2">
    <location>
        <begin position="315"/>
        <end position="335"/>
    </location>
</feature>
<feature type="topological domain" description="Cytoplasmic" evidence="2">
    <location>
        <begin position="336"/>
        <end position="347"/>
    </location>
</feature>
<feature type="transmembrane region" description="Helical" evidence="2">
    <location>
        <begin position="348"/>
        <end position="368"/>
    </location>
</feature>
<feature type="topological domain" description="Periplasmic" evidence="2">
    <location>
        <begin position="369"/>
        <end position="378"/>
    </location>
</feature>
<feature type="transmembrane region" description="Helical" evidence="2">
    <location>
        <begin position="379"/>
        <end position="399"/>
    </location>
</feature>
<feature type="topological domain" description="Cytoplasmic" evidence="2">
    <location>
        <begin position="400"/>
        <end position="409"/>
    </location>
</feature>
<dbReference type="EMBL" id="CP001593">
    <property type="protein sequence ID" value="ADE66380.1"/>
    <property type="status" value="ALT_INIT"/>
    <property type="molecule type" value="Genomic_DNA"/>
</dbReference>
<dbReference type="RefSeq" id="WP_002215753.1">
    <property type="nucleotide sequence ID" value="NC_014029.1"/>
</dbReference>
<dbReference type="SMR" id="D5B5U5"/>
<dbReference type="KEGG" id="ypz:YPZ3_3471"/>
<dbReference type="HOGENOM" id="CLU_001265_47_2_6"/>
<dbReference type="GO" id="GO:0005886">
    <property type="term" value="C:plasma membrane"/>
    <property type="evidence" value="ECO:0007669"/>
    <property type="project" value="UniProtKB-SubCell"/>
</dbReference>
<dbReference type="GO" id="GO:0015385">
    <property type="term" value="F:sodium:proton antiporter activity"/>
    <property type="evidence" value="ECO:0007669"/>
    <property type="project" value="TreeGrafter"/>
</dbReference>
<dbReference type="GO" id="GO:0046677">
    <property type="term" value="P:response to antibiotic"/>
    <property type="evidence" value="ECO:0007669"/>
    <property type="project" value="UniProtKB-KW"/>
</dbReference>
<dbReference type="GO" id="GO:1990961">
    <property type="term" value="P:xenobiotic detoxification by transmembrane export across the plasma membrane"/>
    <property type="evidence" value="ECO:0007669"/>
    <property type="project" value="TreeGrafter"/>
</dbReference>
<dbReference type="CDD" id="cd17320">
    <property type="entry name" value="MFS_MdfA_MDR_like"/>
    <property type="match status" value="1"/>
</dbReference>
<dbReference type="Gene3D" id="1.20.1720.10">
    <property type="entry name" value="Multidrug resistance protein D"/>
    <property type="match status" value="1"/>
</dbReference>
<dbReference type="InterPro" id="IPR011701">
    <property type="entry name" value="MFS"/>
</dbReference>
<dbReference type="InterPro" id="IPR020846">
    <property type="entry name" value="MFS_dom"/>
</dbReference>
<dbReference type="InterPro" id="IPR036259">
    <property type="entry name" value="MFS_trans_sf"/>
</dbReference>
<dbReference type="NCBIfam" id="NF011931">
    <property type="entry name" value="PRK15402.1"/>
    <property type="match status" value="1"/>
</dbReference>
<dbReference type="PANTHER" id="PTHR23502">
    <property type="entry name" value="MAJOR FACILITATOR SUPERFAMILY"/>
    <property type="match status" value="1"/>
</dbReference>
<dbReference type="PANTHER" id="PTHR23502:SF43">
    <property type="entry name" value="MULTIDRUG TRANSPORTER MDFA"/>
    <property type="match status" value="1"/>
</dbReference>
<dbReference type="Pfam" id="PF07690">
    <property type="entry name" value="MFS_1"/>
    <property type="match status" value="1"/>
</dbReference>
<dbReference type="SUPFAM" id="SSF103473">
    <property type="entry name" value="MFS general substrate transporter"/>
    <property type="match status" value="1"/>
</dbReference>
<dbReference type="PROSITE" id="PS50850">
    <property type="entry name" value="MFS"/>
    <property type="match status" value="1"/>
</dbReference>
<proteinExistence type="inferred from homology"/>
<accession>D5B5U5</accession>
<comment type="function">
    <text evidence="1">Efflux pump driven by the proton motive force. Confers resistance to a broad spectrum of chemically unrelated drugs (By similarity).</text>
</comment>
<comment type="subunit">
    <text evidence="1">Monomer.</text>
</comment>
<comment type="subcellular location">
    <subcellularLocation>
        <location evidence="1">Cell inner membrane</location>
        <topology evidence="1">Multi-pass membrane protein</topology>
    </subcellularLocation>
</comment>
<comment type="similarity">
    <text evidence="3">Belongs to the major facilitator superfamily. MdfA family.</text>
</comment>
<comment type="sequence caution" evidence="3">
    <conflict type="erroneous initiation">
        <sequence resource="EMBL-CDS" id="ADE66380"/>
    </conflict>
    <text>Truncated N-terminus.</text>
</comment>
<name>MDFA_YERPZ</name>
<sequence length="409" mass="44065">MQTSFSPATRLGRRALLFPLCLVLFEFAAYIANDMIQPGMLAVVAEFNASVEWVPTSMTAYLAGGMFLQWLLGPLSDRRGRRPVMLAGVAFFVVTCLAILLVNSIEQFIAMRFLQGIGLCFIGAVGYATIQESFEEAVCIKITALMANVALIAPLLGPLAGAALIHVAPWQTMFVLFAVLGAISFAGLWRAMPETASLKGEKLSVANMWRDYKQVLANRRFLCGSLALGFASLPLLAWIAQSPVILISGEQLSTFEYGILQVPIFGALIIGNLTLARLSGKTSIPQLIRYGAGPMIVGLMIAAGSTLYSSHAYLWMTAGLSLYAFGIGLANAGLVRLTLFASDISKGTVSAAMGMISMMIFTLGIELAKVAYLWGDSRGFNLFNLMSGLLWLGLVMVFIRRQPEAVATE</sequence>